<sequence length="189" mass="21245">MILIIDNYDSFTYNLAQCVGELGHDVLVCRNDEIDVVKIKKLNPEKIIISPGPGKPTESGISLDVISSLAEYIPILGVCLGHQSIGYINGGSIIKVPKIMHGKTSQIYHDREDLFINLPNPFIATRYHSLIIDRANFPTNLAVTAWTDNNIIMACRHKHYKMLRGIQFHPESLWTVCGQQLLKNFLDSD</sequence>
<accession>P51362</accession>
<comment type="catalytic activity">
    <reaction>
        <text>chorismate + L-glutamine = anthranilate + pyruvate + L-glutamate + H(+)</text>
        <dbReference type="Rhea" id="RHEA:21732"/>
        <dbReference type="ChEBI" id="CHEBI:15361"/>
        <dbReference type="ChEBI" id="CHEBI:15378"/>
        <dbReference type="ChEBI" id="CHEBI:16567"/>
        <dbReference type="ChEBI" id="CHEBI:29748"/>
        <dbReference type="ChEBI" id="CHEBI:29985"/>
        <dbReference type="ChEBI" id="CHEBI:58359"/>
        <dbReference type="EC" id="4.1.3.27"/>
    </reaction>
</comment>
<comment type="pathway">
    <text>Amino-acid biosynthesis; L-tryptophan biosynthesis; L-tryptophan from chorismate: step 1/5.</text>
</comment>
<comment type="subunit">
    <text>Tetramer of two components I and two components II.</text>
</comment>
<comment type="subcellular location">
    <subcellularLocation>
        <location>Plastid</location>
        <location>Chloroplast</location>
    </subcellularLocation>
</comment>
<comment type="miscellaneous">
    <text>Component I catalyzes the formation of anthranilate using ammonia rather than glutamine, whereas component II provides glutamine amidotransferase activity.</text>
</comment>
<protein>
    <recommendedName>
        <fullName>Anthranilate synthase component 2</fullName>
        <shortName>AS</shortName>
        <ecNumber>4.1.3.27</ecNumber>
    </recommendedName>
    <alternativeName>
        <fullName>Anthranilate synthase, glutamine amidotransferase component</fullName>
    </alternativeName>
</protein>
<proteinExistence type="predicted"/>
<dbReference type="EC" id="4.1.3.27"/>
<dbReference type="EMBL" id="U38804">
    <property type="protein sequence ID" value="AAC08248.1"/>
    <property type="molecule type" value="Genomic_DNA"/>
</dbReference>
<dbReference type="PIR" id="S73283">
    <property type="entry name" value="S73283"/>
</dbReference>
<dbReference type="RefSeq" id="NP_053972.1">
    <property type="nucleotide sequence ID" value="NC_000925.1"/>
</dbReference>
<dbReference type="SMR" id="P51362"/>
<dbReference type="MEROPS" id="C26.955"/>
<dbReference type="GeneID" id="810001"/>
<dbReference type="UniPathway" id="UPA00035">
    <property type="reaction ID" value="UER00040"/>
</dbReference>
<dbReference type="GO" id="GO:0009507">
    <property type="term" value="C:chloroplast"/>
    <property type="evidence" value="ECO:0007669"/>
    <property type="project" value="UniProtKB-SubCell"/>
</dbReference>
<dbReference type="GO" id="GO:0005829">
    <property type="term" value="C:cytosol"/>
    <property type="evidence" value="ECO:0007669"/>
    <property type="project" value="TreeGrafter"/>
</dbReference>
<dbReference type="GO" id="GO:0004049">
    <property type="term" value="F:anthranilate synthase activity"/>
    <property type="evidence" value="ECO:0007669"/>
    <property type="project" value="UniProtKB-EC"/>
</dbReference>
<dbReference type="GO" id="GO:0000162">
    <property type="term" value="P:L-tryptophan biosynthetic process"/>
    <property type="evidence" value="ECO:0007669"/>
    <property type="project" value="UniProtKB-UniPathway"/>
</dbReference>
<dbReference type="CDD" id="cd01743">
    <property type="entry name" value="GATase1_Anthranilate_Synthase"/>
    <property type="match status" value="1"/>
</dbReference>
<dbReference type="FunFam" id="3.40.50.880:FF:000003">
    <property type="entry name" value="Anthranilate synthase component II"/>
    <property type="match status" value="1"/>
</dbReference>
<dbReference type="Gene3D" id="3.40.50.880">
    <property type="match status" value="1"/>
</dbReference>
<dbReference type="InterPro" id="IPR050472">
    <property type="entry name" value="Anth_synth/Amidotransfase"/>
</dbReference>
<dbReference type="InterPro" id="IPR029062">
    <property type="entry name" value="Class_I_gatase-like"/>
</dbReference>
<dbReference type="InterPro" id="IPR017926">
    <property type="entry name" value="GATASE"/>
</dbReference>
<dbReference type="InterPro" id="IPR006221">
    <property type="entry name" value="TrpG/PapA_dom"/>
</dbReference>
<dbReference type="NCBIfam" id="TIGR00566">
    <property type="entry name" value="trpG_papA"/>
    <property type="match status" value="1"/>
</dbReference>
<dbReference type="PANTHER" id="PTHR43418:SF4">
    <property type="entry name" value="MULTIFUNCTIONAL TRYPTOPHAN BIOSYNTHESIS PROTEIN"/>
    <property type="match status" value="1"/>
</dbReference>
<dbReference type="PANTHER" id="PTHR43418">
    <property type="entry name" value="MULTIFUNCTIONAL TRYPTOPHAN BIOSYNTHESIS PROTEIN-RELATED"/>
    <property type="match status" value="1"/>
</dbReference>
<dbReference type="Pfam" id="PF00117">
    <property type="entry name" value="GATase"/>
    <property type="match status" value="1"/>
</dbReference>
<dbReference type="PRINTS" id="PR00097">
    <property type="entry name" value="ANTSNTHASEII"/>
</dbReference>
<dbReference type="PRINTS" id="PR00099">
    <property type="entry name" value="CPSGATASE"/>
</dbReference>
<dbReference type="PRINTS" id="PR00096">
    <property type="entry name" value="GATASE"/>
</dbReference>
<dbReference type="SUPFAM" id="SSF52317">
    <property type="entry name" value="Class I glutamine amidotransferase-like"/>
    <property type="match status" value="1"/>
</dbReference>
<dbReference type="PROSITE" id="PS51273">
    <property type="entry name" value="GATASE_TYPE_1"/>
    <property type="match status" value="1"/>
</dbReference>
<name>TRPG_PORPU</name>
<evidence type="ECO:0000250" key="1">
    <source>
        <dbReference type="UniProtKB" id="P00900"/>
    </source>
</evidence>
<evidence type="ECO:0000255" key="2">
    <source>
        <dbReference type="PROSITE-ProRule" id="PRU00605"/>
    </source>
</evidence>
<reference key="1">
    <citation type="journal article" date="1995" name="Plant Mol. Biol. Rep.">
        <title>Complete nucleotide sequence of the Porphyra purpurea chloroplast genome.</title>
        <authorList>
            <person name="Reith M.E."/>
            <person name="Munholland J."/>
        </authorList>
    </citation>
    <scope>NUCLEOTIDE SEQUENCE [LARGE SCALE GENOMIC DNA]</scope>
    <source>
        <strain>Avonport</strain>
    </source>
</reference>
<organism>
    <name type="scientific">Porphyra purpurea</name>
    <name type="common">Red seaweed</name>
    <name type="synonym">Ulva purpurea</name>
    <dbReference type="NCBI Taxonomy" id="2787"/>
    <lineage>
        <taxon>Eukaryota</taxon>
        <taxon>Rhodophyta</taxon>
        <taxon>Bangiophyceae</taxon>
        <taxon>Bangiales</taxon>
        <taxon>Bangiaceae</taxon>
        <taxon>Porphyra</taxon>
    </lineage>
</organism>
<keyword id="KW-0028">Amino-acid biosynthesis</keyword>
<keyword id="KW-0057">Aromatic amino acid biosynthesis</keyword>
<keyword id="KW-0150">Chloroplast</keyword>
<keyword id="KW-0315">Glutamine amidotransferase</keyword>
<keyword id="KW-0456">Lyase</keyword>
<keyword id="KW-0934">Plastid</keyword>
<keyword id="KW-0822">Tryptophan biosynthesis</keyword>
<feature type="chain" id="PRO_0000056894" description="Anthranilate synthase component 2">
    <location>
        <begin position="1"/>
        <end position="189"/>
    </location>
</feature>
<feature type="domain" description="Glutamine amidotransferase type-1" evidence="2">
    <location>
        <begin position="1"/>
        <end position="189"/>
    </location>
</feature>
<feature type="active site" description="Nucleophile; for GATase activity" evidence="1">
    <location>
        <position position="79"/>
    </location>
</feature>
<feature type="active site" evidence="2">
    <location>
        <position position="169"/>
    </location>
</feature>
<feature type="active site" evidence="2">
    <location>
        <position position="171"/>
    </location>
</feature>
<feature type="binding site" evidence="1">
    <location>
        <begin position="52"/>
        <end position="54"/>
    </location>
    <ligand>
        <name>L-glutamine</name>
        <dbReference type="ChEBI" id="CHEBI:58359"/>
    </ligand>
</feature>
<feature type="binding site" evidence="1">
    <location>
        <position position="83"/>
    </location>
    <ligand>
        <name>L-glutamine</name>
        <dbReference type="ChEBI" id="CHEBI:58359"/>
    </ligand>
</feature>
<feature type="binding site" evidence="1">
    <location>
        <begin position="129"/>
        <end position="130"/>
    </location>
    <ligand>
        <name>L-glutamine</name>
        <dbReference type="ChEBI" id="CHEBI:58359"/>
    </ligand>
</feature>
<geneLocation type="chloroplast"/>
<gene>
    <name type="primary">trpG</name>
</gene>